<evidence type="ECO:0000255" key="1">
    <source>
        <dbReference type="HAMAP-Rule" id="MF_00377"/>
    </source>
</evidence>
<dbReference type="EMBL" id="CP000262">
    <property type="protein sequence ID" value="ABF36951.1"/>
    <property type="molecule type" value="Genomic_DNA"/>
</dbReference>
<dbReference type="SMR" id="Q1J960"/>
<dbReference type="KEGG" id="spi:MGAS10750_Spy0001"/>
<dbReference type="HOGENOM" id="CLU_026910_3_2_9"/>
<dbReference type="Proteomes" id="UP000002434">
    <property type="component" value="Chromosome"/>
</dbReference>
<dbReference type="GO" id="GO:0005737">
    <property type="term" value="C:cytoplasm"/>
    <property type="evidence" value="ECO:0007669"/>
    <property type="project" value="UniProtKB-SubCell"/>
</dbReference>
<dbReference type="GO" id="GO:0005886">
    <property type="term" value="C:plasma membrane"/>
    <property type="evidence" value="ECO:0007669"/>
    <property type="project" value="TreeGrafter"/>
</dbReference>
<dbReference type="GO" id="GO:0005524">
    <property type="term" value="F:ATP binding"/>
    <property type="evidence" value="ECO:0007669"/>
    <property type="project" value="UniProtKB-UniRule"/>
</dbReference>
<dbReference type="GO" id="GO:0016887">
    <property type="term" value="F:ATP hydrolysis activity"/>
    <property type="evidence" value="ECO:0007669"/>
    <property type="project" value="InterPro"/>
</dbReference>
<dbReference type="GO" id="GO:0003688">
    <property type="term" value="F:DNA replication origin binding"/>
    <property type="evidence" value="ECO:0007669"/>
    <property type="project" value="UniProtKB-UniRule"/>
</dbReference>
<dbReference type="GO" id="GO:0008289">
    <property type="term" value="F:lipid binding"/>
    <property type="evidence" value="ECO:0007669"/>
    <property type="project" value="UniProtKB-KW"/>
</dbReference>
<dbReference type="GO" id="GO:0006270">
    <property type="term" value="P:DNA replication initiation"/>
    <property type="evidence" value="ECO:0007669"/>
    <property type="project" value="UniProtKB-UniRule"/>
</dbReference>
<dbReference type="GO" id="GO:0006275">
    <property type="term" value="P:regulation of DNA replication"/>
    <property type="evidence" value="ECO:0007669"/>
    <property type="project" value="UniProtKB-UniRule"/>
</dbReference>
<dbReference type="CDD" id="cd00009">
    <property type="entry name" value="AAA"/>
    <property type="match status" value="1"/>
</dbReference>
<dbReference type="CDD" id="cd06571">
    <property type="entry name" value="Bac_DnaA_C"/>
    <property type="match status" value="1"/>
</dbReference>
<dbReference type="FunFam" id="1.10.1750.10:FF:000002">
    <property type="entry name" value="Chromosomal replication initiator protein DnaA"/>
    <property type="match status" value="1"/>
</dbReference>
<dbReference type="FunFam" id="3.40.50.300:FF:000668">
    <property type="entry name" value="Chromosomal replication initiator protein DnaA"/>
    <property type="match status" value="1"/>
</dbReference>
<dbReference type="Gene3D" id="1.10.1750.10">
    <property type="match status" value="1"/>
</dbReference>
<dbReference type="Gene3D" id="1.10.8.60">
    <property type="match status" value="1"/>
</dbReference>
<dbReference type="Gene3D" id="3.40.50.300">
    <property type="entry name" value="P-loop containing nucleotide triphosphate hydrolases"/>
    <property type="match status" value="1"/>
</dbReference>
<dbReference type="HAMAP" id="MF_00377">
    <property type="entry name" value="DnaA_bact"/>
    <property type="match status" value="1"/>
</dbReference>
<dbReference type="InterPro" id="IPR003593">
    <property type="entry name" value="AAA+_ATPase"/>
</dbReference>
<dbReference type="InterPro" id="IPR001957">
    <property type="entry name" value="Chromosome_initiator_DnaA"/>
</dbReference>
<dbReference type="InterPro" id="IPR020591">
    <property type="entry name" value="Chromosome_initiator_DnaA-like"/>
</dbReference>
<dbReference type="InterPro" id="IPR018312">
    <property type="entry name" value="Chromosome_initiator_DnaA_CS"/>
</dbReference>
<dbReference type="InterPro" id="IPR013159">
    <property type="entry name" value="DnaA_C"/>
</dbReference>
<dbReference type="InterPro" id="IPR013317">
    <property type="entry name" value="DnaA_dom"/>
</dbReference>
<dbReference type="InterPro" id="IPR027417">
    <property type="entry name" value="P-loop_NTPase"/>
</dbReference>
<dbReference type="InterPro" id="IPR010921">
    <property type="entry name" value="Trp_repressor/repl_initiator"/>
</dbReference>
<dbReference type="NCBIfam" id="TIGR00362">
    <property type="entry name" value="DnaA"/>
    <property type="match status" value="1"/>
</dbReference>
<dbReference type="PANTHER" id="PTHR30050">
    <property type="entry name" value="CHROMOSOMAL REPLICATION INITIATOR PROTEIN DNAA"/>
    <property type="match status" value="1"/>
</dbReference>
<dbReference type="PANTHER" id="PTHR30050:SF2">
    <property type="entry name" value="CHROMOSOMAL REPLICATION INITIATOR PROTEIN DNAA"/>
    <property type="match status" value="1"/>
</dbReference>
<dbReference type="Pfam" id="PF00308">
    <property type="entry name" value="Bac_DnaA"/>
    <property type="match status" value="1"/>
</dbReference>
<dbReference type="Pfam" id="PF08299">
    <property type="entry name" value="Bac_DnaA_C"/>
    <property type="match status" value="1"/>
</dbReference>
<dbReference type="PRINTS" id="PR00051">
    <property type="entry name" value="DNAA"/>
</dbReference>
<dbReference type="SMART" id="SM00382">
    <property type="entry name" value="AAA"/>
    <property type="match status" value="1"/>
</dbReference>
<dbReference type="SMART" id="SM00760">
    <property type="entry name" value="Bac_DnaA_C"/>
    <property type="match status" value="1"/>
</dbReference>
<dbReference type="SUPFAM" id="SSF52540">
    <property type="entry name" value="P-loop containing nucleoside triphosphate hydrolases"/>
    <property type="match status" value="1"/>
</dbReference>
<dbReference type="SUPFAM" id="SSF48295">
    <property type="entry name" value="TrpR-like"/>
    <property type="match status" value="1"/>
</dbReference>
<dbReference type="PROSITE" id="PS01008">
    <property type="entry name" value="DNAA"/>
    <property type="match status" value="1"/>
</dbReference>
<keyword id="KW-0067">ATP-binding</keyword>
<keyword id="KW-0963">Cytoplasm</keyword>
<keyword id="KW-0235">DNA replication</keyword>
<keyword id="KW-0238">DNA-binding</keyword>
<keyword id="KW-0446">Lipid-binding</keyword>
<keyword id="KW-0547">Nucleotide-binding</keyword>
<organism>
    <name type="scientific">Streptococcus pyogenes serotype M4 (strain MGAS10750)</name>
    <dbReference type="NCBI Taxonomy" id="370554"/>
    <lineage>
        <taxon>Bacteria</taxon>
        <taxon>Bacillati</taxon>
        <taxon>Bacillota</taxon>
        <taxon>Bacilli</taxon>
        <taxon>Lactobacillales</taxon>
        <taxon>Streptococcaceae</taxon>
        <taxon>Streptococcus</taxon>
    </lineage>
</organism>
<reference key="1">
    <citation type="journal article" date="2006" name="Proc. Natl. Acad. Sci. U.S.A.">
        <title>Molecular genetic anatomy of inter- and intraserotype variation in the human bacterial pathogen group A Streptococcus.</title>
        <authorList>
            <person name="Beres S.B."/>
            <person name="Richter E.W."/>
            <person name="Nagiec M.J."/>
            <person name="Sumby P."/>
            <person name="Porcella S.F."/>
            <person name="DeLeo F.R."/>
            <person name="Musser J.M."/>
        </authorList>
    </citation>
    <scope>NUCLEOTIDE SEQUENCE [LARGE SCALE GENOMIC DNA]</scope>
    <source>
        <strain>MGAS10750</strain>
    </source>
</reference>
<sequence>MTENEQIFWNRVLELAQSQLKQATYEFFVHDARLLKVDKHIATIYLDQMKELFWEKNLKDVILTAGFEVYNAQISVDYVFEEDLMIEQNQTKINQKPKQQALNSLPTVTSDLNPKYSFENFIQGDENRWAVAASIAVANTPGTTYNPLFIWGGPGLGKTHLLNAIGNSVLLENPNARIKYITAENFINEFVIHIRLDTMDELKEKFRNLDLLLIDDIQSLAKKTLSGTQEEFFNTFNALHNNNKQIVLTSDRTPDHLNDLEDRLVTRFKWGLTVNITPPDFETRVAILTNKIQEYNFIFPQDTIEYLAGQFDSNVRDLEGALKDISLVANFKQIDTITVDIAAEAIRARKQDGPKMTVIPIEEIQTQVGKFYGVTVKEIKATKRTQNIVLARQVAMFLAREMTDNSLPKIGKEFGGRDHSTVLHAYNKIKNMISQDESLRIEIETIKNKIK</sequence>
<accession>Q1J960</accession>
<feature type="chain" id="PRO_1000048742" description="Chromosomal replication initiator protein DnaA">
    <location>
        <begin position="1"/>
        <end position="451"/>
    </location>
</feature>
<feature type="region of interest" description="Domain I, interacts with DnaA modulators" evidence="1">
    <location>
        <begin position="1"/>
        <end position="77"/>
    </location>
</feature>
<feature type="region of interest" description="Domain II" evidence="1">
    <location>
        <begin position="77"/>
        <end position="110"/>
    </location>
</feature>
<feature type="region of interest" description="Domain III, AAA+ region" evidence="1">
    <location>
        <begin position="111"/>
        <end position="329"/>
    </location>
</feature>
<feature type="region of interest" description="Domain IV, binds dsDNA" evidence="1">
    <location>
        <begin position="330"/>
        <end position="451"/>
    </location>
</feature>
<feature type="binding site" evidence="1">
    <location>
        <position position="155"/>
    </location>
    <ligand>
        <name>ATP</name>
        <dbReference type="ChEBI" id="CHEBI:30616"/>
    </ligand>
</feature>
<feature type="binding site" evidence="1">
    <location>
        <position position="157"/>
    </location>
    <ligand>
        <name>ATP</name>
        <dbReference type="ChEBI" id="CHEBI:30616"/>
    </ligand>
</feature>
<feature type="binding site" evidence="1">
    <location>
        <position position="158"/>
    </location>
    <ligand>
        <name>ATP</name>
        <dbReference type="ChEBI" id="CHEBI:30616"/>
    </ligand>
</feature>
<feature type="binding site" evidence="1">
    <location>
        <position position="159"/>
    </location>
    <ligand>
        <name>ATP</name>
        <dbReference type="ChEBI" id="CHEBI:30616"/>
    </ligand>
</feature>
<comment type="function">
    <text evidence="1">Plays an essential role in the initiation and regulation of chromosomal replication. ATP-DnaA binds to the origin of replication (oriC) to initiate formation of the DNA replication initiation complex once per cell cycle. Binds the DnaA box (a 9 base pair repeat at the origin) and separates the double-stranded (ds)DNA. Forms a right-handed helical filament on oriC DNA; dsDNA binds to the exterior of the filament while single-stranded (ss)DNA is stabiized in the filament's interior. The ATP-DnaA-oriC complex binds and stabilizes one strand of the AT-rich DNA unwinding element (DUE), permitting loading of DNA polymerase. After initiation quickly degrades to an ADP-DnaA complex that is not apt for DNA replication. Binds acidic phospholipids.</text>
</comment>
<comment type="subunit">
    <text evidence="1">Oligomerizes as a right-handed, spiral filament on DNA at oriC.</text>
</comment>
<comment type="subcellular location">
    <subcellularLocation>
        <location evidence="1">Cytoplasm</location>
    </subcellularLocation>
</comment>
<comment type="domain">
    <text evidence="1">Domain I is involved in oligomerization and binding regulators, domain II is flexibile and of varying length in different bacteria, domain III forms the AAA+ region, while domain IV binds dsDNA.</text>
</comment>
<comment type="similarity">
    <text evidence="1">Belongs to the DnaA family.</text>
</comment>
<gene>
    <name evidence="1" type="primary">dnaA</name>
    <name type="ordered locus">MGAS10750_Spy0001</name>
</gene>
<protein>
    <recommendedName>
        <fullName evidence="1">Chromosomal replication initiator protein DnaA</fullName>
    </recommendedName>
</protein>
<proteinExistence type="inferred from homology"/>
<name>DNAA_STRPF</name>